<gene>
    <name evidence="2" type="primary">prs</name>
    <name evidence="7" type="synonym">prsA</name>
    <name type="ordered locus">STM1780</name>
</gene>
<evidence type="ECO:0000250" key="1">
    <source>
        <dbReference type="UniProtKB" id="P0A717"/>
    </source>
</evidence>
<evidence type="ECO:0000255" key="2">
    <source>
        <dbReference type="HAMAP-Rule" id="MF_00583"/>
    </source>
</evidence>
<evidence type="ECO:0000269" key="3">
    <source>
    </source>
</evidence>
<evidence type="ECO:0000269" key="4">
    <source>
    </source>
</evidence>
<evidence type="ECO:0000269" key="5">
    <source>
    </source>
</evidence>
<evidence type="ECO:0000269" key="6">
    <source>
    </source>
</evidence>
<evidence type="ECO:0000303" key="7">
    <source>
    </source>
</evidence>
<evidence type="ECO:0000303" key="8">
    <source>
    </source>
</evidence>
<evidence type="ECO:0000305" key="9">
    <source>
    </source>
</evidence>
<evidence type="ECO:0000305" key="10">
    <source>
    </source>
</evidence>
<evidence type="ECO:0000305" key="11">
    <source>
    </source>
</evidence>
<evidence type="ECO:0000305" key="12">
    <source>
    </source>
</evidence>
<evidence type="ECO:0000305" key="13">
    <source>
    </source>
</evidence>
<reference key="1">
    <citation type="journal article" date="1988" name="J. Bacteriol.">
        <title>Structure of the gene encoding phosphoribosylpyrophosphate synthetase (prsA) in Salmonella typhimurium.</title>
        <authorList>
            <person name="Bower S.G."/>
            <person name="Hove-Jensen B."/>
            <person name="Switzer R.L."/>
        </authorList>
    </citation>
    <scope>NUCLEOTIDE SEQUENCE [GENOMIC DNA]</scope>
    <scope>FUNCTION</scope>
</reference>
<reference key="2">
    <citation type="journal article" date="2001" name="Nature">
        <title>Complete genome sequence of Salmonella enterica serovar Typhimurium LT2.</title>
        <authorList>
            <person name="McClelland M."/>
            <person name="Sanderson K.E."/>
            <person name="Spieth J."/>
            <person name="Clifton S.W."/>
            <person name="Latreille P."/>
            <person name="Courtney L."/>
            <person name="Porwollik S."/>
            <person name="Ali J."/>
            <person name="Dante M."/>
            <person name="Du F."/>
            <person name="Hou S."/>
            <person name="Layman D."/>
            <person name="Leonard S."/>
            <person name="Nguyen C."/>
            <person name="Scott K."/>
            <person name="Holmes A."/>
            <person name="Grewal N."/>
            <person name="Mulvaney E."/>
            <person name="Ryan E."/>
            <person name="Sun H."/>
            <person name="Florea L."/>
            <person name="Miller W."/>
            <person name="Stoneking T."/>
            <person name="Nhan M."/>
            <person name="Waterston R."/>
            <person name="Wilson R.K."/>
        </authorList>
    </citation>
    <scope>NUCLEOTIDE SEQUENCE [LARGE SCALE GENOMIC DNA]</scope>
    <source>
        <strain>LT2 / SGSC1412 / ATCC 700720</strain>
    </source>
</reference>
<reference key="3">
    <citation type="journal article" date="1969" name="J. Biol. Chem.">
        <title>Regulation and mechanism of phosphoribosylpyrophosphate synthetase. I. Purification and properties of the enzyme from Salmonella typhimurium.</title>
        <authorList>
            <person name="Switzer R.L."/>
        </authorList>
    </citation>
    <scope>FUNCTION</scope>
    <scope>CATALYTIC ACTIVITY</scope>
    <scope>ACTIVITY REGULATION</scope>
    <scope>BIOPHYSICOCHEMICAL PROPERTIES</scope>
    <scope>COFACTOR</scope>
    <source>
        <strain>LT2</strain>
    </source>
</reference>
<reference key="4">
    <citation type="journal article" date="1971" name="J. Biol. Chem.">
        <title>Regulation and mechanism of phosphoribosylpyrophosphate synthetase. 3. Kinetic studies of the reaction mechanism.</title>
        <authorList>
            <person name="Switzer R.L."/>
        </authorList>
    </citation>
    <scope>FUNCTION</scope>
    <scope>CATALYTIC ACTIVITY</scope>
    <scope>ACTIVITY REGULATION</scope>
    <scope>BIOPHYSICOCHEMICAL PROPERTIES</scope>
    <scope>COFACTOR</scope>
</reference>
<reference key="5">
    <citation type="journal article" date="1973" name="J. Biol. Chem.">
        <title>Regulation and mechanism of phosphoribosylpyrophosphate synthetase. V. Inhibition by end products and regulation by adenosine diphosphate.</title>
        <authorList>
            <person name="Switzer R.L."/>
            <person name="Sogin D.C."/>
        </authorList>
    </citation>
    <scope>CATALYTIC ACTIVITY</scope>
    <scope>ACTIVITY REGULATION</scope>
</reference>
<reference key="6">
    <citation type="journal article" date="1982" name="J. Biol. Chem.">
        <title>Binding of the substrates and the allosteric inhibitor adenosine 5'-diphosphate to phosphoribosylpyrophosphate synthetase from Salmonella typhimurium.</title>
        <authorList>
            <person name="Gibson K.J."/>
            <person name="Schubert K.R."/>
            <person name="Switzer R.L."/>
        </authorList>
    </citation>
    <scope>CATALYTIC ACTIVITY</scope>
    <scope>ACTIVITY REGULATION</scope>
</reference>
<protein>
    <recommendedName>
        <fullName evidence="2">Ribose-phosphate pyrophosphokinase</fullName>
        <shortName evidence="2">RPPK</shortName>
        <ecNumber evidence="2 10 11 12 13">2.7.6.1</ecNumber>
    </recommendedName>
    <alternativeName>
        <fullName evidence="2">5-phospho-D-ribosyl alpha-1-diphosphate synthase</fullName>
    </alternativeName>
    <alternativeName>
        <fullName evidence="2 8">Phosphoribosyl diphosphate synthase</fullName>
    </alternativeName>
    <alternativeName>
        <fullName evidence="2 8">Phosphoribosyl pyrophosphate synthase</fullName>
        <shortName evidence="2 8">P-Rib-PP synthase</shortName>
        <shortName evidence="2 8">PRPP synthase</shortName>
        <shortName evidence="2 8">PRPPase</shortName>
    </alternativeName>
</protein>
<keyword id="KW-0021">Allosteric enzyme</keyword>
<keyword id="KW-0067">ATP-binding</keyword>
<keyword id="KW-0963">Cytoplasm</keyword>
<keyword id="KW-0418">Kinase</keyword>
<keyword id="KW-0460">Magnesium</keyword>
<keyword id="KW-0479">Metal-binding</keyword>
<keyword id="KW-0545">Nucleotide biosynthesis</keyword>
<keyword id="KW-0547">Nucleotide-binding</keyword>
<keyword id="KW-1185">Reference proteome</keyword>
<keyword id="KW-0808">Transferase</keyword>
<feature type="initiator methionine" description="Removed" evidence="1">
    <location>
        <position position="1"/>
    </location>
</feature>
<feature type="chain" id="PRO_0000141184" description="Ribose-phosphate pyrophosphokinase">
    <location>
        <begin position="2"/>
        <end position="315"/>
    </location>
</feature>
<feature type="active site" evidence="2">
    <location>
        <position position="194"/>
    </location>
</feature>
<feature type="binding site" evidence="2">
    <location>
        <begin position="37"/>
        <end position="39"/>
    </location>
    <ligand>
        <name>ATP</name>
        <dbReference type="ChEBI" id="CHEBI:30616"/>
    </ligand>
</feature>
<feature type="binding site" evidence="2">
    <location>
        <begin position="96"/>
        <end position="97"/>
    </location>
    <ligand>
        <name>ATP</name>
        <dbReference type="ChEBI" id="CHEBI:30616"/>
    </ligand>
</feature>
<feature type="binding site" evidence="2">
    <location>
        <position position="131"/>
    </location>
    <ligand>
        <name>Mg(2+)</name>
        <dbReference type="ChEBI" id="CHEBI:18420"/>
        <label>1</label>
    </ligand>
</feature>
<feature type="binding site" evidence="2">
    <location>
        <position position="170"/>
    </location>
    <ligand>
        <name>Mg(2+)</name>
        <dbReference type="ChEBI" id="CHEBI:18420"/>
        <label>2</label>
    </ligand>
</feature>
<feature type="binding site" evidence="2">
    <location>
        <position position="196"/>
    </location>
    <ligand>
        <name>D-ribose 5-phosphate</name>
        <dbReference type="ChEBI" id="CHEBI:78346"/>
    </ligand>
</feature>
<feature type="binding site" evidence="2">
    <location>
        <position position="220"/>
    </location>
    <ligand>
        <name>D-ribose 5-phosphate</name>
        <dbReference type="ChEBI" id="CHEBI:78346"/>
    </ligand>
</feature>
<feature type="binding site" evidence="2">
    <location>
        <begin position="224"/>
        <end position="228"/>
    </location>
    <ligand>
        <name>D-ribose 5-phosphate</name>
        <dbReference type="ChEBI" id="CHEBI:78346"/>
    </ligand>
</feature>
<comment type="function">
    <text evidence="2 3 4 9">Involved in the biosynthesis of the central metabolite phospho-alpha-D-ribosyl-1-pyrophosphate (PRPP) via the transfer of pyrophosphoryl group from ATP to 1-hydroxyl of ribose-5-phosphate (Rib-5-P).</text>
</comment>
<comment type="catalytic activity">
    <reaction evidence="2 10 11 12 13">
        <text>D-ribose 5-phosphate + ATP = 5-phospho-alpha-D-ribose 1-diphosphate + AMP + H(+)</text>
        <dbReference type="Rhea" id="RHEA:15609"/>
        <dbReference type="ChEBI" id="CHEBI:15378"/>
        <dbReference type="ChEBI" id="CHEBI:30616"/>
        <dbReference type="ChEBI" id="CHEBI:58017"/>
        <dbReference type="ChEBI" id="CHEBI:78346"/>
        <dbReference type="ChEBI" id="CHEBI:456215"/>
        <dbReference type="EC" id="2.7.6.1"/>
    </reaction>
</comment>
<comment type="cofactor">
    <cofactor evidence="2 3 4">
        <name>Mg(2+)</name>
        <dbReference type="ChEBI" id="CHEBI:18420"/>
    </cofactor>
    <text evidence="2 3">Binds 2 Mg(2+) ions per subunit (Potential). Can also use Mn(2+) ions (PubMed:4306285).</text>
</comment>
<comment type="activity regulation">
    <text evidence="3 4 5 6">Activated by inorganic phosphate (PubMed:4306285, PubMed:4324215). In addition to form a complex with ATP, Mg(2+) also acts as a cofactor (PubMed:4306285, PubMed:4324215). Strongly inhibited by ADP (or Mg-ADP) through competitive binding at the activation site and at a specific allosteric site (PubMed:4324215, PubMed:4346344, PubMed:6277896). Competitively inhibited by Ca(2+) (PubMed:4324215, PubMed:4346344).</text>
</comment>
<comment type="biophysicochemical properties">
    <kinetics>
        <KM evidence="4">46 uM for ATP</KM>
        <KM evidence="4">160 uM for Rib-5-P</KM>
    </kinetics>
    <phDependence>
        <text evidence="3">Optimum pH is 8.1-8.6.</text>
    </phDependence>
</comment>
<comment type="pathway">
    <text evidence="2">Metabolic intermediate biosynthesis; 5-phospho-alpha-D-ribose 1-diphosphate biosynthesis; 5-phospho-alpha-D-ribose 1-diphosphate from D-ribose 5-phosphate (route I): step 1/1.</text>
</comment>
<comment type="subunit">
    <text evidence="2">Homohexamer.</text>
</comment>
<comment type="subcellular location">
    <subcellularLocation>
        <location evidence="2">Cytoplasm</location>
    </subcellularLocation>
</comment>
<comment type="miscellaneous">
    <text evidence="4">This enzyme uses a steady state ordered mechanism, where Mg(2+) binds first, followed by Mg-ATP and lastly, ribose 5-phosphate.</text>
</comment>
<comment type="similarity">
    <text evidence="2">Belongs to the ribose-phosphate pyrophosphokinase family. Class I subfamily.</text>
</comment>
<proteinExistence type="evidence at protein level"/>
<sequence length="315" mass="34216">MPDMKLFAGNATPELAQRIANRLYTSLGDAAVGRFSDGEVSVQINENVRGGDIFIIQSTCAPTNDNLMELVVMVDALRRASAGRITAVIPYFGYARQDRRVRSARVPITAKVVADFLSSVGVDRVLTVDLHAEQIQGFFDVPVDNVFGSPILLEDMLQLNLDNPIVVSPDIGGVVRARAIAKLLNDTDMAIIDKRRPRANVSQVMHIIGDVAGRDCVLVDDMIDTGGTLCKAAEALKERGAKRVFAYATHPIFSGNAANNLRNSVIDEVVVCDTIPLTDEIKALPNVRTLTLSGMLAEAIRRISNEESISAMFEH</sequence>
<organism>
    <name type="scientific">Salmonella typhimurium (strain LT2 / SGSC1412 / ATCC 700720)</name>
    <dbReference type="NCBI Taxonomy" id="99287"/>
    <lineage>
        <taxon>Bacteria</taxon>
        <taxon>Pseudomonadati</taxon>
        <taxon>Pseudomonadota</taxon>
        <taxon>Gammaproteobacteria</taxon>
        <taxon>Enterobacterales</taxon>
        <taxon>Enterobacteriaceae</taxon>
        <taxon>Salmonella</taxon>
    </lineage>
</organism>
<name>KPRS_SALTY</name>
<dbReference type="EC" id="2.7.6.1" evidence="2 10 11 12 13"/>
<dbReference type="EMBL" id="M19488">
    <property type="protein sequence ID" value="AAA27196.1"/>
    <property type="molecule type" value="Genomic_DNA"/>
</dbReference>
<dbReference type="EMBL" id="AE006468">
    <property type="protein sequence ID" value="AAL20695.1"/>
    <property type="molecule type" value="Genomic_DNA"/>
</dbReference>
<dbReference type="PIR" id="A30408">
    <property type="entry name" value="KIEBRT"/>
</dbReference>
<dbReference type="RefSeq" id="NP_460736.1">
    <property type="nucleotide sequence ID" value="NC_003197.2"/>
</dbReference>
<dbReference type="RefSeq" id="WP_001518537.1">
    <property type="nucleotide sequence ID" value="NC_003197.2"/>
</dbReference>
<dbReference type="SMR" id="P0A1V6"/>
<dbReference type="STRING" id="99287.STM1780"/>
<dbReference type="PaxDb" id="99287-STM1780"/>
<dbReference type="GeneID" id="1253299"/>
<dbReference type="GeneID" id="93033289"/>
<dbReference type="KEGG" id="stm:STM1780"/>
<dbReference type="PATRIC" id="fig|99287.12.peg.1877"/>
<dbReference type="HOGENOM" id="CLU_033546_2_0_6"/>
<dbReference type="OMA" id="YFGWARQ"/>
<dbReference type="PhylomeDB" id="P0A1V6"/>
<dbReference type="BioCyc" id="SENT99287:STM1780-MONOMER"/>
<dbReference type="SABIO-RK" id="P0A1V6"/>
<dbReference type="UniPathway" id="UPA00087">
    <property type="reaction ID" value="UER00172"/>
</dbReference>
<dbReference type="Proteomes" id="UP000001014">
    <property type="component" value="Chromosome"/>
</dbReference>
<dbReference type="GO" id="GO:0005737">
    <property type="term" value="C:cytoplasm"/>
    <property type="evidence" value="ECO:0000318"/>
    <property type="project" value="GO_Central"/>
</dbReference>
<dbReference type="GO" id="GO:0002189">
    <property type="term" value="C:ribose phosphate diphosphokinase complex"/>
    <property type="evidence" value="ECO:0000318"/>
    <property type="project" value="GO_Central"/>
</dbReference>
<dbReference type="GO" id="GO:0005524">
    <property type="term" value="F:ATP binding"/>
    <property type="evidence" value="ECO:0007669"/>
    <property type="project" value="UniProtKB-KW"/>
</dbReference>
<dbReference type="GO" id="GO:0016301">
    <property type="term" value="F:kinase activity"/>
    <property type="evidence" value="ECO:0007669"/>
    <property type="project" value="UniProtKB-KW"/>
</dbReference>
<dbReference type="GO" id="GO:0000287">
    <property type="term" value="F:magnesium ion binding"/>
    <property type="evidence" value="ECO:0007669"/>
    <property type="project" value="UniProtKB-UniRule"/>
</dbReference>
<dbReference type="GO" id="GO:0004749">
    <property type="term" value="F:ribose phosphate diphosphokinase activity"/>
    <property type="evidence" value="ECO:0000318"/>
    <property type="project" value="GO_Central"/>
</dbReference>
<dbReference type="GO" id="GO:0006015">
    <property type="term" value="P:5-phosphoribose 1-diphosphate biosynthetic process"/>
    <property type="evidence" value="ECO:0000318"/>
    <property type="project" value="GO_Central"/>
</dbReference>
<dbReference type="GO" id="GO:0006164">
    <property type="term" value="P:purine nucleotide biosynthetic process"/>
    <property type="evidence" value="ECO:0000318"/>
    <property type="project" value="GO_Central"/>
</dbReference>
<dbReference type="GO" id="GO:0009156">
    <property type="term" value="P:ribonucleoside monophosphate biosynthetic process"/>
    <property type="evidence" value="ECO:0007669"/>
    <property type="project" value="InterPro"/>
</dbReference>
<dbReference type="CDD" id="cd06223">
    <property type="entry name" value="PRTases_typeI"/>
    <property type="match status" value="1"/>
</dbReference>
<dbReference type="FunFam" id="3.40.50.2020:FF:000001">
    <property type="entry name" value="Ribose-phosphate pyrophosphokinase"/>
    <property type="match status" value="1"/>
</dbReference>
<dbReference type="FunFam" id="3.40.50.2020:FF:000005">
    <property type="entry name" value="Ribose-phosphate pyrophosphokinase 1"/>
    <property type="match status" value="1"/>
</dbReference>
<dbReference type="Gene3D" id="3.40.50.2020">
    <property type="match status" value="2"/>
</dbReference>
<dbReference type="HAMAP" id="MF_00583_B">
    <property type="entry name" value="RibP_PPkinase_B"/>
    <property type="match status" value="1"/>
</dbReference>
<dbReference type="InterPro" id="IPR000842">
    <property type="entry name" value="PRib_PP_synth_CS"/>
</dbReference>
<dbReference type="InterPro" id="IPR029099">
    <property type="entry name" value="Pribosyltran_N"/>
</dbReference>
<dbReference type="InterPro" id="IPR000836">
    <property type="entry name" value="PRibTrfase_dom"/>
</dbReference>
<dbReference type="InterPro" id="IPR029057">
    <property type="entry name" value="PRTase-like"/>
</dbReference>
<dbReference type="InterPro" id="IPR005946">
    <property type="entry name" value="Rib-P_diPkinase"/>
</dbReference>
<dbReference type="InterPro" id="IPR037515">
    <property type="entry name" value="Rib-P_diPkinase_bac"/>
</dbReference>
<dbReference type="NCBIfam" id="NF002320">
    <property type="entry name" value="PRK01259.1"/>
    <property type="match status" value="1"/>
</dbReference>
<dbReference type="NCBIfam" id="TIGR01251">
    <property type="entry name" value="ribP_PPkin"/>
    <property type="match status" value="1"/>
</dbReference>
<dbReference type="PANTHER" id="PTHR10210">
    <property type="entry name" value="RIBOSE-PHOSPHATE DIPHOSPHOKINASE FAMILY MEMBER"/>
    <property type="match status" value="1"/>
</dbReference>
<dbReference type="PANTHER" id="PTHR10210:SF41">
    <property type="entry name" value="RIBOSE-PHOSPHATE PYROPHOSPHOKINASE 1, CHLOROPLASTIC"/>
    <property type="match status" value="1"/>
</dbReference>
<dbReference type="Pfam" id="PF14572">
    <property type="entry name" value="Pribosyl_synth"/>
    <property type="match status" value="1"/>
</dbReference>
<dbReference type="Pfam" id="PF13793">
    <property type="entry name" value="Pribosyltran_N"/>
    <property type="match status" value="1"/>
</dbReference>
<dbReference type="SMART" id="SM01400">
    <property type="entry name" value="Pribosyltran_N"/>
    <property type="match status" value="1"/>
</dbReference>
<dbReference type="SUPFAM" id="SSF53271">
    <property type="entry name" value="PRTase-like"/>
    <property type="match status" value="1"/>
</dbReference>
<dbReference type="PROSITE" id="PS00114">
    <property type="entry name" value="PRPP_SYNTHASE"/>
    <property type="match status" value="1"/>
</dbReference>
<accession>P0A1V6</accession>
<accession>P15849</accession>